<evidence type="ECO:0000255" key="1">
    <source>
        <dbReference type="HAMAP-Rule" id="MF_00105"/>
    </source>
</evidence>
<protein>
    <recommendedName>
        <fullName evidence="1">Transcription elongation factor GreA</fullName>
    </recommendedName>
    <alternativeName>
        <fullName evidence="1">Transcript cleavage factor GreA</fullName>
    </alternativeName>
</protein>
<proteinExistence type="inferred from homology"/>
<organism>
    <name type="scientific">Campylobacter jejuni subsp. jejuni serotype O:6 (strain 81116 / NCTC 11828)</name>
    <dbReference type="NCBI Taxonomy" id="407148"/>
    <lineage>
        <taxon>Bacteria</taxon>
        <taxon>Pseudomonadati</taxon>
        <taxon>Campylobacterota</taxon>
        <taxon>Epsilonproteobacteria</taxon>
        <taxon>Campylobacterales</taxon>
        <taxon>Campylobacteraceae</taxon>
        <taxon>Campylobacter</taxon>
    </lineage>
</organism>
<keyword id="KW-0175">Coiled coil</keyword>
<keyword id="KW-0238">DNA-binding</keyword>
<keyword id="KW-0804">Transcription</keyword>
<keyword id="KW-0805">Transcription regulation</keyword>
<accession>A8FK75</accession>
<sequence>MQKEPMSQFGYDKLAAELKDLKDNQRPAVVIEIDTARSHGDLKENAEYHAAREKQALIESRIAELSDLLARAQVIDPSSYEHDSVKFGSSVVIMDLDTEKESKYTLVGICEGNLDKGYISIASPIAKAMLGKKEGDDFKVRLPKGESEFEILSINYEPLKF</sequence>
<name>GREA_CAMJ8</name>
<dbReference type="EMBL" id="CP000814">
    <property type="protein sequence ID" value="ABV51862.1"/>
    <property type="molecule type" value="Genomic_DNA"/>
</dbReference>
<dbReference type="RefSeq" id="WP_002858660.1">
    <property type="nucleotide sequence ID" value="NC_009839.1"/>
</dbReference>
<dbReference type="SMR" id="A8FK75"/>
<dbReference type="KEGG" id="cju:C8J_0263"/>
<dbReference type="HOGENOM" id="CLU_101379_2_0_7"/>
<dbReference type="GO" id="GO:0003677">
    <property type="term" value="F:DNA binding"/>
    <property type="evidence" value="ECO:0007669"/>
    <property type="project" value="UniProtKB-UniRule"/>
</dbReference>
<dbReference type="GO" id="GO:0070063">
    <property type="term" value="F:RNA polymerase binding"/>
    <property type="evidence" value="ECO:0007669"/>
    <property type="project" value="InterPro"/>
</dbReference>
<dbReference type="GO" id="GO:0006354">
    <property type="term" value="P:DNA-templated transcription elongation"/>
    <property type="evidence" value="ECO:0007669"/>
    <property type="project" value="TreeGrafter"/>
</dbReference>
<dbReference type="GO" id="GO:0032784">
    <property type="term" value="P:regulation of DNA-templated transcription elongation"/>
    <property type="evidence" value="ECO:0007669"/>
    <property type="project" value="UniProtKB-UniRule"/>
</dbReference>
<dbReference type="FunFam" id="1.10.287.180:FF:000001">
    <property type="entry name" value="Transcription elongation factor GreA"/>
    <property type="match status" value="1"/>
</dbReference>
<dbReference type="FunFam" id="3.10.50.30:FF:000001">
    <property type="entry name" value="Transcription elongation factor GreA"/>
    <property type="match status" value="1"/>
</dbReference>
<dbReference type="Gene3D" id="3.10.50.30">
    <property type="entry name" value="Transcription elongation factor, GreA/GreB, C-terminal domain"/>
    <property type="match status" value="1"/>
</dbReference>
<dbReference type="Gene3D" id="1.10.287.180">
    <property type="entry name" value="Transcription elongation factor, GreA/GreB, N-terminal domain"/>
    <property type="match status" value="1"/>
</dbReference>
<dbReference type="HAMAP" id="MF_00105">
    <property type="entry name" value="GreA_GreB"/>
    <property type="match status" value="1"/>
</dbReference>
<dbReference type="InterPro" id="IPR036953">
    <property type="entry name" value="GreA/GreB_C_sf"/>
</dbReference>
<dbReference type="InterPro" id="IPR018151">
    <property type="entry name" value="TF_GreA/GreB_CS"/>
</dbReference>
<dbReference type="InterPro" id="IPR006359">
    <property type="entry name" value="Tscrpt_elong_fac_GreA"/>
</dbReference>
<dbReference type="InterPro" id="IPR028624">
    <property type="entry name" value="Tscrpt_elong_fac_GreA/B"/>
</dbReference>
<dbReference type="InterPro" id="IPR001437">
    <property type="entry name" value="Tscrpt_elong_fac_GreA/B_C"/>
</dbReference>
<dbReference type="InterPro" id="IPR023459">
    <property type="entry name" value="Tscrpt_elong_fac_GreA/B_fam"/>
</dbReference>
<dbReference type="InterPro" id="IPR022691">
    <property type="entry name" value="Tscrpt_elong_fac_GreA/B_N"/>
</dbReference>
<dbReference type="InterPro" id="IPR036805">
    <property type="entry name" value="Tscrpt_elong_fac_GreA/B_N_sf"/>
</dbReference>
<dbReference type="NCBIfam" id="TIGR01462">
    <property type="entry name" value="greA"/>
    <property type="match status" value="1"/>
</dbReference>
<dbReference type="NCBIfam" id="NF001261">
    <property type="entry name" value="PRK00226.1-2"/>
    <property type="match status" value="1"/>
</dbReference>
<dbReference type="NCBIfam" id="NF001263">
    <property type="entry name" value="PRK00226.1-4"/>
    <property type="match status" value="1"/>
</dbReference>
<dbReference type="PANTHER" id="PTHR30437">
    <property type="entry name" value="TRANSCRIPTION ELONGATION FACTOR GREA"/>
    <property type="match status" value="1"/>
</dbReference>
<dbReference type="PANTHER" id="PTHR30437:SF4">
    <property type="entry name" value="TRANSCRIPTION ELONGATION FACTOR GREA"/>
    <property type="match status" value="1"/>
</dbReference>
<dbReference type="Pfam" id="PF01272">
    <property type="entry name" value="GreA_GreB"/>
    <property type="match status" value="1"/>
</dbReference>
<dbReference type="Pfam" id="PF03449">
    <property type="entry name" value="GreA_GreB_N"/>
    <property type="match status" value="1"/>
</dbReference>
<dbReference type="PIRSF" id="PIRSF006092">
    <property type="entry name" value="GreA_GreB"/>
    <property type="match status" value="1"/>
</dbReference>
<dbReference type="SUPFAM" id="SSF54534">
    <property type="entry name" value="FKBP-like"/>
    <property type="match status" value="1"/>
</dbReference>
<dbReference type="SUPFAM" id="SSF46557">
    <property type="entry name" value="GreA transcript cleavage protein, N-terminal domain"/>
    <property type="match status" value="1"/>
</dbReference>
<dbReference type="PROSITE" id="PS00829">
    <property type="entry name" value="GREAB_1"/>
    <property type="match status" value="1"/>
</dbReference>
<dbReference type="PROSITE" id="PS00830">
    <property type="entry name" value="GREAB_2"/>
    <property type="match status" value="1"/>
</dbReference>
<comment type="function">
    <text evidence="1">Necessary for efficient RNA polymerase transcription elongation past template-encoded arresting sites. The arresting sites in DNA have the property of trapping a certain fraction of elongating RNA polymerases that pass through, resulting in locked ternary complexes. Cleavage of the nascent transcript by cleavage factors such as GreA or GreB allows the resumption of elongation from the new 3'terminus. GreA releases sequences of 2 to 3 nucleotides.</text>
</comment>
<comment type="similarity">
    <text evidence="1">Belongs to the GreA/GreB family.</text>
</comment>
<gene>
    <name evidence="1" type="primary">greA</name>
    <name type="ordered locus">C8J_0263</name>
</gene>
<feature type="chain" id="PRO_1000071312" description="Transcription elongation factor GreA">
    <location>
        <begin position="1"/>
        <end position="161"/>
    </location>
</feature>
<feature type="coiled-coil region" evidence="1">
    <location>
        <begin position="45"/>
        <end position="73"/>
    </location>
</feature>
<reference key="1">
    <citation type="journal article" date="2007" name="J. Bacteriol.">
        <title>The complete genome sequence of Campylobacter jejuni strain 81116 (NCTC11828).</title>
        <authorList>
            <person name="Pearson B.M."/>
            <person name="Gaskin D.J.H."/>
            <person name="Segers R.P.A.M."/>
            <person name="Wells J.M."/>
            <person name="Nuijten P.J.M."/>
            <person name="van Vliet A.H.M."/>
        </authorList>
    </citation>
    <scope>NUCLEOTIDE SEQUENCE [LARGE SCALE GENOMIC DNA]</scope>
    <source>
        <strain>81116 / NCTC 11828</strain>
    </source>
</reference>